<keyword id="KW-0175">Coiled coil</keyword>
<keyword id="KW-0489">Methyltransferase</keyword>
<keyword id="KW-0539">Nucleus</keyword>
<keyword id="KW-1185">Reference proteome</keyword>
<keyword id="KW-0690">Ribosome biogenesis</keyword>
<keyword id="KW-0698">rRNA processing</keyword>
<keyword id="KW-0949">S-adenosyl-L-methionine</keyword>
<keyword id="KW-0808">Transferase</keyword>
<evidence type="ECO:0000255" key="1">
    <source>
        <dbReference type="HAMAP-Rule" id="MF_03163"/>
    </source>
</evidence>
<evidence type="ECO:0000256" key="2">
    <source>
        <dbReference type="SAM" id="MobiDB-lite"/>
    </source>
</evidence>
<feature type="chain" id="PRO_0000155594" description="AdoMet-dependent rRNA methyltransferase SPB1">
    <location>
        <begin position="1"/>
        <end position="837"/>
    </location>
</feature>
<feature type="region of interest" description="Disordered" evidence="2">
    <location>
        <begin position="359"/>
        <end position="381"/>
    </location>
</feature>
<feature type="region of interest" description="Disordered" evidence="2">
    <location>
        <begin position="483"/>
        <end position="529"/>
    </location>
</feature>
<feature type="region of interest" description="Disordered" evidence="2">
    <location>
        <begin position="573"/>
        <end position="644"/>
    </location>
</feature>
<feature type="region of interest" description="Disordered" evidence="2">
    <location>
        <begin position="779"/>
        <end position="808"/>
    </location>
</feature>
<feature type="coiled-coil region" evidence="1">
    <location>
        <begin position="345"/>
        <end position="390"/>
    </location>
</feature>
<feature type="compositionally biased region" description="Basic and acidic residues" evidence="2">
    <location>
        <begin position="372"/>
        <end position="381"/>
    </location>
</feature>
<feature type="compositionally biased region" description="Acidic residues" evidence="2">
    <location>
        <begin position="518"/>
        <end position="529"/>
    </location>
</feature>
<feature type="compositionally biased region" description="Basic and acidic residues" evidence="2">
    <location>
        <begin position="593"/>
        <end position="602"/>
    </location>
</feature>
<feature type="compositionally biased region" description="Acidic residues" evidence="2">
    <location>
        <begin position="603"/>
        <end position="635"/>
    </location>
</feature>
<feature type="active site" description="Proton acceptor" evidence="1">
    <location>
        <position position="159"/>
    </location>
</feature>
<feature type="binding site" evidence="1">
    <location>
        <position position="58"/>
    </location>
    <ligand>
        <name>S-adenosyl-L-methionine</name>
        <dbReference type="ChEBI" id="CHEBI:59789"/>
    </ligand>
</feature>
<feature type="binding site" evidence="1">
    <location>
        <position position="60"/>
    </location>
    <ligand>
        <name>S-adenosyl-L-methionine</name>
        <dbReference type="ChEBI" id="CHEBI:59789"/>
    </ligand>
</feature>
<feature type="binding site" evidence="1">
    <location>
        <position position="78"/>
    </location>
    <ligand>
        <name>S-adenosyl-L-methionine</name>
        <dbReference type="ChEBI" id="CHEBI:59789"/>
    </ligand>
</feature>
<feature type="binding site" evidence="1">
    <location>
        <position position="94"/>
    </location>
    <ligand>
        <name>S-adenosyl-L-methionine</name>
        <dbReference type="ChEBI" id="CHEBI:59789"/>
    </ligand>
</feature>
<feature type="binding site" evidence="1">
    <location>
        <position position="119"/>
    </location>
    <ligand>
        <name>S-adenosyl-L-methionine</name>
        <dbReference type="ChEBI" id="CHEBI:59789"/>
    </ligand>
</feature>
<proteinExistence type="inferred from homology"/>
<sequence>MGKTQKKNSKGRLDRYYYLAKEKGYRARSSFKIIQINEKFGHFLEKSKVVIDLCAAPGSWCQVASKLCPVNSLIIGVDIVPMKPMPNVITFQSDITTEDCRSRLRGYMKTWKADTVLHDGAPNVGLGWAQDAFTQSHLTLQALKLAVENLVVNGTFVTKIFRSKDYNKLIWVFQQLFEKVEATKPPASRNVSAEIFVVCKGFKAPKKLDPRLLDPKEVFEELPDGPQNMEAKIYNPEKKVRKRQGYEEGDHLLYHECSVLDFVKSEDPITVLGEMNKFTVEQDDPEWKILKRLKQTTNEFMACIEDLKVLGKKDFKMLLKWRKASRDILGLDKDEDKGDIEIEPLNEEEQIEKELRDLQEKQKQKQKREKRRKNEEKQKELTRMQMNMLTPTDIGIEAANIGRDSLFNLKTAEKTGILDKLAKGKKRVIFTEDEIAQDNDLHIDENIVIRDRHDMNEVDDLEGELNAMYQDYKNRKAERDANFRAKQARGGDVEDEWTGFEGTKDSEDENNEPKDYIESDDSELSDEDDDEAINQLISKLKSQNNGSKLSSQAKALFSNPLFENVQPILQSKTDDVVDSESVGDATKISNKRSYNEMKKEDLSDSSDEDSSSESDFEIVANDESDGDIDSDYDSDEERKRTTKEKYDKDIDIATVEAMTLAHQLALGQRSKHDLVDEGFNRYAFRDTENLPEWFLEEEKQHSKVNRPITKEAVMALKEKMKALNARPIKKVAEARARKKMRAVKRLEKIKKKAGLINDDSDKSEKDKAEEIAKLMRKVTKKQKTKPKVTLVVAHGKNKGLSGRPKGIKGKYKMVDGVLKNEQRALKRIAKKHHKKKK</sequence>
<organism>
    <name type="scientific">Candida glabrata (strain ATCC 2001 / BCRC 20586 / JCM 3761 / NBRC 0622 / NRRL Y-65 / CBS 138)</name>
    <name type="common">Yeast</name>
    <name type="synonym">Nakaseomyces glabratus</name>
    <dbReference type="NCBI Taxonomy" id="284593"/>
    <lineage>
        <taxon>Eukaryota</taxon>
        <taxon>Fungi</taxon>
        <taxon>Dikarya</taxon>
        <taxon>Ascomycota</taxon>
        <taxon>Saccharomycotina</taxon>
        <taxon>Saccharomycetes</taxon>
        <taxon>Saccharomycetales</taxon>
        <taxon>Saccharomycetaceae</taxon>
        <taxon>Nakaseomyces</taxon>
    </lineage>
</organism>
<reference key="1">
    <citation type="journal article" date="2004" name="Nature">
        <title>Genome evolution in yeasts.</title>
        <authorList>
            <person name="Dujon B."/>
            <person name="Sherman D."/>
            <person name="Fischer G."/>
            <person name="Durrens P."/>
            <person name="Casaregola S."/>
            <person name="Lafontaine I."/>
            <person name="de Montigny J."/>
            <person name="Marck C."/>
            <person name="Neuveglise C."/>
            <person name="Talla E."/>
            <person name="Goffard N."/>
            <person name="Frangeul L."/>
            <person name="Aigle M."/>
            <person name="Anthouard V."/>
            <person name="Babour A."/>
            <person name="Barbe V."/>
            <person name="Barnay S."/>
            <person name="Blanchin S."/>
            <person name="Beckerich J.-M."/>
            <person name="Beyne E."/>
            <person name="Bleykasten C."/>
            <person name="Boisrame A."/>
            <person name="Boyer J."/>
            <person name="Cattolico L."/>
            <person name="Confanioleri F."/>
            <person name="de Daruvar A."/>
            <person name="Despons L."/>
            <person name="Fabre E."/>
            <person name="Fairhead C."/>
            <person name="Ferry-Dumazet H."/>
            <person name="Groppi A."/>
            <person name="Hantraye F."/>
            <person name="Hennequin C."/>
            <person name="Jauniaux N."/>
            <person name="Joyet P."/>
            <person name="Kachouri R."/>
            <person name="Kerrest A."/>
            <person name="Koszul R."/>
            <person name="Lemaire M."/>
            <person name="Lesur I."/>
            <person name="Ma L."/>
            <person name="Muller H."/>
            <person name="Nicaud J.-M."/>
            <person name="Nikolski M."/>
            <person name="Oztas S."/>
            <person name="Ozier-Kalogeropoulos O."/>
            <person name="Pellenz S."/>
            <person name="Potier S."/>
            <person name="Richard G.-F."/>
            <person name="Straub M.-L."/>
            <person name="Suleau A."/>
            <person name="Swennen D."/>
            <person name="Tekaia F."/>
            <person name="Wesolowski-Louvel M."/>
            <person name="Westhof E."/>
            <person name="Wirth B."/>
            <person name="Zeniou-Meyer M."/>
            <person name="Zivanovic Y."/>
            <person name="Bolotin-Fukuhara M."/>
            <person name="Thierry A."/>
            <person name="Bouchier C."/>
            <person name="Caudron B."/>
            <person name="Scarpelli C."/>
            <person name="Gaillardin C."/>
            <person name="Weissenbach J."/>
            <person name="Wincker P."/>
            <person name="Souciet J.-L."/>
        </authorList>
    </citation>
    <scope>NUCLEOTIDE SEQUENCE [LARGE SCALE GENOMIC DNA]</scope>
    <source>
        <strain>ATCC 2001 / BCRC 20586 / JCM 3761 / NBRC 0622 / NRRL Y-65 / CBS 138</strain>
    </source>
</reference>
<name>SPB1_CANGA</name>
<protein>
    <recommendedName>
        <fullName evidence="1">AdoMet-dependent rRNA methyltransferase SPB1</fullName>
        <ecNumber evidence="1">2.1.1.-</ecNumber>
    </recommendedName>
    <alternativeName>
        <fullName evidence="1">2'-O-ribose RNA methyltransferase</fullName>
    </alternativeName>
    <alternativeName>
        <fullName evidence="1">S-adenosyl-L-methionine-dependent methyltransferase</fullName>
    </alternativeName>
</protein>
<gene>
    <name evidence="1" type="primary">SPB1</name>
    <name type="ordered locus">CAGL0B00484g</name>
</gene>
<accession>Q6FX63</accession>
<comment type="function">
    <text evidence="1">Required for proper assembly of pre-ribosomal particles during the biogenesis of the 60S ribosomal subunit.</text>
</comment>
<comment type="catalytic activity">
    <reaction evidence="1">
        <text>a ribonucleotide in rRNA + S-adenosyl-L-methionine = a 2'-O-methylribonucleotide in rRNA + S-adenosyl-L-homocysteine + H(+)</text>
        <dbReference type="Rhea" id="RHEA:48628"/>
        <dbReference type="Rhea" id="RHEA-COMP:12164"/>
        <dbReference type="Rhea" id="RHEA-COMP:12165"/>
        <dbReference type="ChEBI" id="CHEBI:15378"/>
        <dbReference type="ChEBI" id="CHEBI:57856"/>
        <dbReference type="ChEBI" id="CHEBI:59789"/>
        <dbReference type="ChEBI" id="CHEBI:90675"/>
        <dbReference type="ChEBI" id="CHEBI:90676"/>
    </reaction>
</comment>
<comment type="subunit">
    <text evidence="1">Component of the nucleolar and nucleoplasmic pre-60S ribosomal particle.</text>
</comment>
<comment type="subcellular location">
    <subcellularLocation>
        <location evidence="1">Nucleus</location>
        <location evidence="1">Nucleolus</location>
    </subcellularLocation>
</comment>
<comment type="similarity">
    <text evidence="1">Belongs to the class I-like SAM-binding methyltransferase superfamily. RNA methyltransferase RlmE family. SPB1 subfamily.</text>
</comment>
<dbReference type="EC" id="2.1.1.-" evidence="1"/>
<dbReference type="EMBL" id="CR380948">
    <property type="protein sequence ID" value="CAG57891.1"/>
    <property type="molecule type" value="Genomic_DNA"/>
</dbReference>
<dbReference type="RefSeq" id="XP_444991.1">
    <property type="nucleotide sequence ID" value="XM_444991.1"/>
</dbReference>
<dbReference type="SMR" id="Q6FX63"/>
<dbReference type="FunCoup" id="Q6FX63">
    <property type="interactions" value="1239"/>
</dbReference>
<dbReference type="STRING" id="284593.Q6FX63"/>
<dbReference type="EnsemblFungi" id="CAGL0B00484g-T">
    <property type="protein sequence ID" value="CAGL0B00484g-T-p1"/>
    <property type="gene ID" value="CAGL0B00484g"/>
</dbReference>
<dbReference type="KEGG" id="cgr:2886665"/>
<dbReference type="CGD" id="CAL0127852">
    <property type="gene designation" value="CAGL0B00484g"/>
</dbReference>
<dbReference type="VEuPathDB" id="FungiDB:B1J91_B00484g"/>
<dbReference type="VEuPathDB" id="FungiDB:CAGL0B00484g"/>
<dbReference type="eggNOG" id="KOG1098">
    <property type="taxonomic scope" value="Eukaryota"/>
</dbReference>
<dbReference type="HOGENOM" id="CLU_009422_8_1_1"/>
<dbReference type="InParanoid" id="Q6FX63"/>
<dbReference type="OMA" id="QRKDKYY"/>
<dbReference type="Proteomes" id="UP000002428">
    <property type="component" value="Chromosome B"/>
</dbReference>
<dbReference type="GO" id="GO:0005730">
    <property type="term" value="C:nucleolus"/>
    <property type="evidence" value="ECO:0007669"/>
    <property type="project" value="UniProtKB-SubCell"/>
</dbReference>
<dbReference type="GO" id="GO:0030687">
    <property type="term" value="C:preribosome, large subunit precursor"/>
    <property type="evidence" value="ECO:0007669"/>
    <property type="project" value="UniProtKB-UniRule"/>
</dbReference>
<dbReference type="GO" id="GO:0070039">
    <property type="term" value="F:rRNA (guanosine-2'-O-)-methyltransferase activity"/>
    <property type="evidence" value="ECO:0007669"/>
    <property type="project" value="UniProtKB-UniRule"/>
</dbReference>
<dbReference type="GO" id="GO:0008650">
    <property type="term" value="F:rRNA (uridine-2'-O-)-methyltransferase activity"/>
    <property type="evidence" value="ECO:0007669"/>
    <property type="project" value="UniProtKB-UniRule"/>
</dbReference>
<dbReference type="GO" id="GO:0000466">
    <property type="term" value="P:maturation of 5.8S rRNA from tricistronic rRNA transcript (SSU-rRNA, 5.8S rRNA, LSU-rRNA)"/>
    <property type="evidence" value="ECO:0007669"/>
    <property type="project" value="EnsemblFungi"/>
</dbReference>
<dbReference type="GO" id="GO:0000463">
    <property type="term" value="P:maturation of LSU-rRNA from tricistronic rRNA transcript (SSU-rRNA, 5.8S rRNA, LSU-rRNA)"/>
    <property type="evidence" value="ECO:0007669"/>
    <property type="project" value="EnsemblFungi"/>
</dbReference>
<dbReference type="FunFam" id="3.40.50.150:FF:000004">
    <property type="entry name" value="AdoMet-dependent rRNA methyltransferase SPB1"/>
    <property type="match status" value="1"/>
</dbReference>
<dbReference type="Gene3D" id="3.40.50.150">
    <property type="entry name" value="Vaccinia Virus protein VP39"/>
    <property type="match status" value="1"/>
</dbReference>
<dbReference type="HAMAP" id="MF_01547">
    <property type="entry name" value="RNA_methyltr_E"/>
    <property type="match status" value="1"/>
</dbReference>
<dbReference type="HAMAP" id="MF_03163">
    <property type="entry name" value="RNA_methyltr_E_SPB1"/>
    <property type="match status" value="1"/>
</dbReference>
<dbReference type="InterPro" id="IPR050082">
    <property type="entry name" value="RNA_methyltr_RlmE"/>
</dbReference>
<dbReference type="InterPro" id="IPR002877">
    <property type="entry name" value="RNA_MeTrfase_FtsJ_dom"/>
</dbReference>
<dbReference type="InterPro" id="IPR015507">
    <property type="entry name" value="rRNA-MeTfrase_E"/>
</dbReference>
<dbReference type="InterPro" id="IPR012920">
    <property type="entry name" value="rRNA_MeTfrase_SPB1-like_C"/>
</dbReference>
<dbReference type="InterPro" id="IPR024576">
    <property type="entry name" value="rRNA_MeTfrase_Spb1_DUF3381"/>
</dbReference>
<dbReference type="InterPro" id="IPR029063">
    <property type="entry name" value="SAM-dependent_MTases_sf"/>
</dbReference>
<dbReference type="InterPro" id="IPR028589">
    <property type="entry name" value="SPB1-like"/>
</dbReference>
<dbReference type="PANTHER" id="PTHR10920:SF13">
    <property type="entry name" value="PRE-RRNA 2'-O-RIBOSE RNA METHYLTRANSFERASE FTSJ3"/>
    <property type="match status" value="1"/>
</dbReference>
<dbReference type="PANTHER" id="PTHR10920">
    <property type="entry name" value="RIBOSOMAL RNA METHYLTRANSFERASE"/>
    <property type="match status" value="1"/>
</dbReference>
<dbReference type="Pfam" id="PF11861">
    <property type="entry name" value="DUF3381"/>
    <property type="match status" value="1"/>
</dbReference>
<dbReference type="Pfam" id="PF01728">
    <property type="entry name" value="FtsJ"/>
    <property type="match status" value="1"/>
</dbReference>
<dbReference type="Pfam" id="PF07780">
    <property type="entry name" value="Spb1_C"/>
    <property type="match status" value="1"/>
</dbReference>
<dbReference type="SUPFAM" id="SSF53335">
    <property type="entry name" value="S-adenosyl-L-methionine-dependent methyltransferases"/>
    <property type="match status" value="1"/>
</dbReference>